<proteinExistence type="predicted"/>
<dbReference type="EMBL" id="AE014075">
    <property type="protein sequence ID" value="AAN80500.1"/>
    <property type="status" value="ALT_INIT"/>
    <property type="molecule type" value="Genomic_DNA"/>
</dbReference>
<dbReference type="RefSeq" id="WP_001313857.1">
    <property type="nucleotide sequence ID" value="NZ_CP051263.1"/>
</dbReference>
<dbReference type="SMR" id="Q8CW10"/>
<dbReference type="STRING" id="199310.c2040"/>
<dbReference type="DNASU" id="1036146"/>
<dbReference type="KEGG" id="ecc:c2040"/>
<dbReference type="eggNOG" id="COG3313">
    <property type="taxonomic scope" value="Bacteria"/>
</dbReference>
<dbReference type="HOGENOM" id="CLU_162538_0_1_6"/>
<dbReference type="Proteomes" id="UP000001410">
    <property type="component" value="Chromosome"/>
</dbReference>
<dbReference type="InterPro" id="IPR010710">
    <property type="entry name" value="DUF1289"/>
</dbReference>
<dbReference type="PANTHER" id="PTHR35175">
    <property type="entry name" value="DUF1289 DOMAIN-CONTAINING PROTEIN"/>
    <property type="match status" value="1"/>
</dbReference>
<dbReference type="PANTHER" id="PTHR35175:SF1">
    <property type="entry name" value="OXIDOREDUCTASE"/>
    <property type="match status" value="1"/>
</dbReference>
<dbReference type="Pfam" id="PF06945">
    <property type="entry name" value="DUF1289"/>
    <property type="match status" value="1"/>
</dbReference>
<accession>Q8CW10</accession>
<name>YDHL_ECOL6</name>
<sequence>MTEQLEFFPVQSPCRGICQSDERGFCRGCFRSRDERFNWNKMSDGEKQEVLRLCRQRLMRKLRVNKPAPSDEPEQPSLF</sequence>
<keyword id="KW-1185">Reference proteome</keyword>
<evidence type="ECO:0000305" key="1"/>
<protein>
    <recommendedName>
        <fullName>Uncharacterized protein YdhL</fullName>
    </recommendedName>
</protein>
<feature type="chain" id="PRO_0000013852" description="Uncharacterized protein YdhL">
    <location>
        <begin position="1"/>
        <end position="79"/>
    </location>
</feature>
<gene>
    <name type="primary">ydhL</name>
    <name type="ordered locus">c2040</name>
</gene>
<reference key="1">
    <citation type="journal article" date="2002" name="Proc. Natl. Acad. Sci. U.S.A.">
        <title>Extensive mosaic structure revealed by the complete genome sequence of uropathogenic Escherichia coli.</title>
        <authorList>
            <person name="Welch R.A."/>
            <person name="Burland V."/>
            <person name="Plunkett G. III"/>
            <person name="Redford P."/>
            <person name="Roesch P."/>
            <person name="Rasko D."/>
            <person name="Buckles E.L."/>
            <person name="Liou S.-R."/>
            <person name="Boutin A."/>
            <person name="Hackett J."/>
            <person name="Stroud D."/>
            <person name="Mayhew G.F."/>
            <person name="Rose D.J."/>
            <person name="Zhou S."/>
            <person name="Schwartz D.C."/>
            <person name="Perna N.T."/>
            <person name="Mobley H.L.T."/>
            <person name="Donnenberg M.S."/>
            <person name="Blattner F.R."/>
        </authorList>
    </citation>
    <scope>NUCLEOTIDE SEQUENCE [LARGE SCALE GENOMIC DNA]</scope>
    <source>
        <strain>CFT073 / ATCC 700928 / UPEC</strain>
    </source>
</reference>
<organism>
    <name type="scientific">Escherichia coli O6:H1 (strain CFT073 / ATCC 700928 / UPEC)</name>
    <dbReference type="NCBI Taxonomy" id="199310"/>
    <lineage>
        <taxon>Bacteria</taxon>
        <taxon>Pseudomonadati</taxon>
        <taxon>Pseudomonadota</taxon>
        <taxon>Gammaproteobacteria</taxon>
        <taxon>Enterobacterales</taxon>
        <taxon>Enterobacteriaceae</taxon>
        <taxon>Escherichia</taxon>
    </lineage>
</organism>
<comment type="sequence caution" evidence="1">
    <conflict type="erroneous initiation">
        <sequence resource="EMBL-CDS" id="AAN80500"/>
    </conflict>
</comment>